<comment type="subcellular location">
    <subcellularLocation>
        <location evidence="2">Mitochondrion</location>
    </subcellularLocation>
</comment>
<comment type="similarity">
    <text evidence="2">Belongs to the PPR family. P subfamily.</text>
</comment>
<comment type="sequence caution" evidence="2">
    <conflict type="erroneous initiation">
        <sequence resource="EMBL-CDS" id="CAC01876"/>
    </conflict>
    <text>Truncated N-terminus.</text>
</comment>
<comment type="online information" name="Pentatricopeptide repeat proteins">
    <link uri="https://ppr.plantenergy.uwa.edu.au"/>
</comment>
<gene>
    <name type="ordered locus">At5g14770</name>
    <name type="ORF">T9L3_70</name>
</gene>
<name>PP381_ARATH</name>
<sequence>MIMIRIWNNYKGKYRFFLSNCRSFSSIKRPQIPESEETSLSITQRRFDPDLAPIKTRVYVSLFHTLFRLYLSCERLYGAARTLSAMCTFGVVPDSRLWNSLIHQFNVNGLVHDQVSLIYSKMIACGVSPDVFALNVLIHSFCKVGRLSFAISLLRNRVISIDTVTYNTVISGLCEHGLADEAYQFLSEMVKMGILPDTVSYNTLIDGFCKVGNFVRAKALVDEISELNLITHTILLSSYYNLHAIEEAYRDMVMSGFDPDVVTFSSIINRLCKGGKVLEGGLLLREMEEMSVYPNHVTYTTLVDSLFKANIYRHALALYSQMVVRGIPVDLVVYTVLMDGLFKAGDLREAEKTFKMLLEDNQVPNVVTYTALVDGLCKAGDLSSAEFIITQMLEKSVIPNVVTYSSMINGYVKKGMLEEAVSLLRKMEDQNVVPNGFTYGTVIDGLFKAGKEEMAIELSKEMRLIGVEENNYILDALVNHLKRIGRIKEVKGLVKDMVSKGVTLDQINYTSLIDVFFKGGDEEAALAWAEEMQERGMPWDVVSYNVLISGMLKFGKVGADWAYKGMREKGIEPDIATFNIMMNSQRKQGDSEGILKLWDKMKSCGIKPSLMSCNIVVGMLCENGKMEEAIHILNQMMLMEIHPNLTTYRIFLDTSSKHKRADAIFKTHETLLSYGIKLSRQVYNTLIATLCKLGMTKKAAMVMGDMEARGFIPDTVTFNSLMHGYFVGSHVRKALSTYSVMMEAGISPNVATYNTIIRGLSDAGLIKEVDKWLSEMKSRGMRPDDFTYNALISGQAKIGNMKGSMTIYCEMIADGLVPKTSTYNVLISEFANVGKMLQARELLKEMGKRGVSPNTSTYCTMISGLCKLCTHPDVEWNKKAMYLAEAKGLLKEMVEEKGYIPCNQTIYWISAAFSKPGMKVDAERFLKECYKKKNARSSNS</sequence>
<feature type="transit peptide" description="Mitochondrion" evidence="1">
    <location>
        <begin position="1"/>
        <end position="24"/>
    </location>
</feature>
<feature type="chain" id="PRO_0000363518" description="Pentatricopeptide repeat-containing protein At5g14770, mitochondrial">
    <location>
        <begin position="25"/>
        <end position="940"/>
    </location>
</feature>
<feature type="repeat" description="PPR 1">
    <location>
        <begin position="59"/>
        <end position="93"/>
    </location>
</feature>
<feature type="repeat" description="PPR 2">
    <location>
        <begin position="94"/>
        <end position="129"/>
    </location>
</feature>
<feature type="repeat" description="PPR 3">
    <location>
        <begin position="130"/>
        <end position="161"/>
    </location>
</feature>
<feature type="repeat" description="PPR 4">
    <location>
        <begin position="162"/>
        <end position="196"/>
    </location>
</feature>
<feature type="repeat" description="PPR 5">
    <location>
        <begin position="197"/>
        <end position="231"/>
    </location>
</feature>
<feature type="repeat" description="PPR 6">
    <location>
        <begin position="241"/>
        <end position="259"/>
    </location>
</feature>
<feature type="repeat" description="PPR 7">
    <location>
        <begin position="260"/>
        <end position="294"/>
    </location>
</feature>
<feature type="repeat" description="PPR 8">
    <location>
        <begin position="295"/>
        <end position="329"/>
    </location>
</feature>
<feature type="repeat" description="PPR 9">
    <location>
        <begin position="330"/>
        <end position="364"/>
    </location>
</feature>
<feature type="repeat" description="PPR 10">
    <location>
        <begin position="365"/>
        <end position="399"/>
    </location>
</feature>
<feature type="repeat" description="PPR 11">
    <location>
        <begin position="400"/>
        <end position="434"/>
    </location>
</feature>
<feature type="repeat" description="PPR 12">
    <location>
        <begin position="435"/>
        <end position="469"/>
    </location>
</feature>
<feature type="repeat" description="PPR 13">
    <location>
        <begin position="470"/>
        <end position="504"/>
    </location>
</feature>
<feature type="repeat" description="PPR 14">
    <location>
        <begin position="505"/>
        <end position="539"/>
    </location>
</feature>
<feature type="repeat" description="PPR 15">
    <location>
        <begin position="540"/>
        <end position="573"/>
    </location>
</feature>
<feature type="repeat" description="PPR 16">
    <location>
        <begin position="574"/>
        <end position="608"/>
    </location>
</feature>
<feature type="repeat" description="PPR 17">
    <location>
        <begin position="609"/>
        <end position="643"/>
    </location>
</feature>
<feature type="repeat" description="PPR 18">
    <location>
        <begin position="644"/>
        <end position="678"/>
    </location>
</feature>
<feature type="repeat" description="PPR 19">
    <location>
        <begin position="679"/>
        <end position="713"/>
    </location>
</feature>
<feature type="repeat" description="PPR 20">
    <location>
        <begin position="714"/>
        <end position="748"/>
    </location>
</feature>
<feature type="repeat" description="PPR 21">
    <location>
        <begin position="749"/>
        <end position="783"/>
    </location>
</feature>
<feature type="repeat" description="PPR 22">
    <location>
        <begin position="784"/>
        <end position="818"/>
    </location>
</feature>
<feature type="repeat" description="PPR 23">
    <location>
        <begin position="819"/>
        <end position="853"/>
    </location>
</feature>
<feature type="repeat" description="PPR 24">
    <location>
        <begin position="854"/>
        <end position="891"/>
    </location>
</feature>
<proteinExistence type="inferred from homology"/>
<dbReference type="EMBL" id="AL391149">
    <property type="protein sequence ID" value="CAC01876.1"/>
    <property type="status" value="ALT_INIT"/>
    <property type="molecule type" value="Genomic_DNA"/>
</dbReference>
<dbReference type="EMBL" id="CP002688">
    <property type="protein sequence ID" value="AED92075.2"/>
    <property type="molecule type" value="Genomic_DNA"/>
</dbReference>
<dbReference type="EMBL" id="CP002688">
    <property type="protein sequence ID" value="ANM70048.1"/>
    <property type="molecule type" value="Genomic_DNA"/>
</dbReference>
<dbReference type="EMBL" id="CP002688">
    <property type="protein sequence ID" value="ANM70049.1"/>
    <property type="molecule type" value="Genomic_DNA"/>
</dbReference>
<dbReference type="EMBL" id="CP002688">
    <property type="protein sequence ID" value="ANM70050.1"/>
    <property type="molecule type" value="Genomic_DNA"/>
</dbReference>
<dbReference type="EMBL" id="CP002688">
    <property type="protein sequence ID" value="ANM70051.1"/>
    <property type="molecule type" value="Genomic_DNA"/>
</dbReference>
<dbReference type="PIR" id="T51422">
    <property type="entry name" value="T51422"/>
</dbReference>
<dbReference type="RefSeq" id="NP_001318562.1">
    <property type="nucleotide sequence ID" value="NM_001343366.1"/>
</dbReference>
<dbReference type="RefSeq" id="NP_001331686.1">
    <property type="nucleotide sequence ID" value="NM_001343370.1"/>
</dbReference>
<dbReference type="RefSeq" id="NP_001331687.1">
    <property type="nucleotide sequence ID" value="NM_001343369.1"/>
</dbReference>
<dbReference type="RefSeq" id="NP_001331688.1">
    <property type="nucleotide sequence ID" value="NM_001343368.1"/>
</dbReference>
<dbReference type="RefSeq" id="NP_001331689.1">
    <property type="nucleotide sequence ID" value="NM_001343367.1"/>
</dbReference>
<dbReference type="SMR" id="Q9LER0"/>
<dbReference type="FunCoup" id="Q9LER0">
    <property type="interactions" value="53"/>
</dbReference>
<dbReference type="STRING" id="3702.Q9LER0"/>
<dbReference type="iPTMnet" id="Q9LER0"/>
<dbReference type="PaxDb" id="3702-AT5G14770.1"/>
<dbReference type="EnsemblPlants" id="AT5G14770.1">
    <property type="protein sequence ID" value="AT5G14770.1"/>
    <property type="gene ID" value="AT5G14770"/>
</dbReference>
<dbReference type="EnsemblPlants" id="AT5G14770.2">
    <property type="protein sequence ID" value="AT5G14770.2"/>
    <property type="gene ID" value="AT5G14770"/>
</dbReference>
<dbReference type="EnsemblPlants" id="AT5G14770.3">
    <property type="protein sequence ID" value="AT5G14770.3"/>
    <property type="gene ID" value="AT5G14770"/>
</dbReference>
<dbReference type="EnsemblPlants" id="AT5G14770.4">
    <property type="protein sequence ID" value="AT5G14770.4"/>
    <property type="gene ID" value="AT5G14770"/>
</dbReference>
<dbReference type="EnsemblPlants" id="AT5G14770.5">
    <property type="protein sequence ID" value="AT5G14770.5"/>
    <property type="gene ID" value="AT5G14770"/>
</dbReference>
<dbReference type="GeneID" id="831329"/>
<dbReference type="Gramene" id="AT5G14770.1">
    <property type="protein sequence ID" value="AT5G14770.1"/>
    <property type="gene ID" value="AT5G14770"/>
</dbReference>
<dbReference type="Gramene" id="AT5G14770.2">
    <property type="protein sequence ID" value="AT5G14770.2"/>
    <property type="gene ID" value="AT5G14770"/>
</dbReference>
<dbReference type="Gramene" id="AT5G14770.3">
    <property type="protein sequence ID" value="AT5G14770.3"/>
    <property type="gene ID" value="AT5G14770"/>
</dbReference>
<dbReference type="Gramene" id="AT5G14770.4">
    <property type="protein sequence ID" value="AT5G14770.4"/>
    <property type="gene ID" value="AT5G14770"/>
</dbReference>
<dbReference type="Gramene" id="AT5G14770.5">
    <property type="protein sequence ID" value="AT5G14770.5"/>
    <property type="gene ID" value="AT5G14770"/>
</dbReference>
<dbReference type="KEGG" id="ath:AT5G14770"/>
<dbReference type="Araport" id="AT5G14770"/>
<dbReference type="TAIR" id="AT5G14770"/>
<dbReference type="eggNOG" id="KOG4197">
    <property type="taxonomic scope" value="Eukaryota"/>
</dbReference>
<dbReference type="HOGENOM" id="CLU_002706_49_19_1"/>
<dbReference type="InParanoid" id="Q9LER0"/>
<dbReference type="OMA" id="CEHGLAD"/>
<dbReference type="PhylomeDB" id="Q9LER0"/>
<dbReference type="PRO" id="PR:Q9LER0"/>
<dbReference type="Proteomes" id="UP000006548">
    <property type="component" value="Chromosome 5"/>
</dbReference>
<dbReference type="ExpressionAtlas" id="Q9LER0">
    <property type="expression patterns" value="baseline and differential"/>
</dbReference>
<dbReference type="GO" id="GO:0005739">
    <property type="term" value="C:mitochondrion"/>
    <property type="evidence" value="ECO:0007669"/>
    <property type="project" value="UniProtKB-SubCell"/>
</dbReference>
<dbReference type="Gene3D" id="1.25.40.10">
    <property type="entry name" value="Tetratricopeptide repeat domain"/>
    <property type="match status" value="8"/>
</dbReference>
<dbReference type="InterPro" id="IPR002885">
    <property type="entry name" value="Pentatricopeptide_rpt"/>
</dbReference>
<dbReference type="InterPro" id="IPR011990">
    <property type="entry name" value="TPR-like_helical_dom_sf"/>
</dbReference>
<dbReference type="NCBIfam" id="TIGR00756">
    <property type="entry name" value="PPR"/>
    <property type="match status" value="16"/>
</dbReference>
<dbReference type="PANTHER" id="PTHR47447">
    <property type="entry name" value="OS03G0856100 PROTEIN"/>
    <property type="match status" value="1"/>
</dbReference>
<dbReference type="PANTHER" id="PTHR47447:SF28">
    <property type="entry name" value="PENTACOTRIPEPTIDE-REPEAT REGION OF PRORP DOMAIN-CONTAINING PROTEIN"/>
    <property type="match status" value="1"/>
</dbReference>
<dbReference type="Pfam" id="PF01535">
    <property type="entry name" value="PPR"/>
    <property type="match status" value="1"/>
</dbReference>
<dbReference type="Pfam" id="PF12854">
    <property type="entry name" value="PPR_1"/>
    <property type="match status" value="1"/>
</dbReference>
<dbReference type="Pfam" id="PF13041">
    <property type="entry name" value="PPR_2"/>
    <property type="match status" value="9"/>
</dbReference>
<dbReference type="SUPFAM" id="SSF81901">
    <property type="entry name" value="HCP-like"/>
    <property type="match status" value="1"/>
</dbReference>
<dbReference type="PROSITE" id="PS51375">
    <property type="entry name" value="PPR"/>
    <property type="match status" value="23"/>
</dbReference>
<protein>
    <recommendedName>
        <fullName>Pentatricopeptide repeat-containing protein At5g14770, mitochondrial</fullName>
    </recommendedName>
</protein>
<accession>Q9LER0</accession>
<accession>F4K880</accession>
<keyword id="KW-0496">Mitochondrion</keyword>
<keyword id="KW-1185">Reference proteome</keyword>
<keyword id="KW-0677">Repeat</keyword>
<keyword id="KW-0809">Transit peptide</keyword>
<organism>
    <name type="scientific">Arabidopsis thaliana</name>
    <name type="common">Mouse-ear cress</name>
    <dbReference type="NCBI Taxonomy" id="3702"/>
    <lineage>
        <taxon>Eukaryota</taxon>
        <taxon>Viridiplantae</taxon>
        <taxon>Streptophyta</taxon>
        <taxon>Embryophyta</taxon>
        <taxon>Tracheophyta</taxon>
        <taxon>Spermatophyta</taxon>
        <taxon>Magnoliopsida</taxon>
        <taxon>eudicotyledons</taxon>
        <taxon>Gunneridae</taxon>
        <taxon>Pentapetalae</taxon>
        <taxon>rosids</taxon>
        <taxon>malvids</taxon>
        <taxon>Brassicales</taxon>
        <taxon>Brassicaceae</taxon>
        <taxon>Camelineae</taxon>
        <taxon>Arabidopsis</taxon>
    </lineage>
</organism>
<reference key="1">
    <citation type="journal article" date="2000" name="Nature">
        <title>Sequence and analysis of chromosome 5 of the plant Arabidopsis thaliana.</title>
        <authorList>
            <person name="Tabata S."/>
            <person name="Kaneko T."/>
            <person name="Nakamura Y."/>
            <person name="Kotani H."/>
            <person name="Kato T."/>
            <person name="Asamizu E."/>
            <person name="Miyajima N."/>
            <person name="Sasamoto S."/>
            <person name="Kimura T."/>
            <person name="Hosouchi T."/>
            <person name="Kawashima K."/>
            <person name="Kohara M."/>
            <person name="Matsumoto M."/>
            <person name="Matsuno A."/>
            <person name="Muraki A."/>
            <person name="Nakayama S."/>
            <person name="Nakazaki N."/>
            <person name="Naruo K."/>
            <person name="Okumura S."/>
            <person name="Shinpo S."/>
            <person name="Takeuchi C."/>
            <person name="Wada T."/>
            <person name="Watanabe A."/>
            <person name="Yamada M."/>
            <person name="Yasuda M."/>
            <person name="Sato S."/>
            <person name="de la Bastide M."/>
            <person name="Huang E."/>
            <person name="Spiegel L."/>
            <person name="Gnoj L."/>
            <person name="O'Shaughnessy A."/>
            <person name="Preston R."/>
            <person name="Habermann K."/>
            <person name="Murray J."/>
            <person name="Johnson D."/>
            <person name="Rohlfing T."/>
            <person name="Nelson J."/>
            <person name="Stoneking T."/>
            <person name="Pepin K."/>
            <person name="Spieth J."/>
            <person name="Sekhon M."/>
            <person name="Armstrong J."/>
            <person name="Becker M."/>
            <person name="Belter E."/>
            <person name="Cordum H."/>
            <person name="Cordes M."/>
            <person name="Courtney L."/>
            <person name="Courtney W."/>
            <person name="Dante M."/>
            <person name="Du H."/>
            <person name="Edwards J."/>
            <person name="Fryman J."/>
            <person name="Haakensen B."/>
            <person name="Lamar E."/>
            <person name="Latreille P."/>
            <person name="Leonard S."/>
            <person name="Meyer R."/>
            <person name="Mulvaney E."/>
            <person name="Ozersky P."/>
            <person name="Riley A."/>
            <person name="Strowmatt C."/>
            <person name="Wagner-McPherson C."/>
            <person name="Wollam A."/>
            <person name="Yoakum M."/>
            <person name="Bell M."/>
            <person name="Dedhia N."/>
            <person name="Parnell L."/>
            <person name="Shah R."/>
            <person name="Rodriguez M."/>
            <person name="Hoon See L."/>
            <person name="Vil D."/>
            <person name="Baker J."/>
            <person name="Kirchoff K."/>
            <person name="Toth K."/>
            <person name="King L."/>
            <person name="Bahret A."/>
            <person name="Miller B."/>
            <person name="Marra M.A."/>
            <person name="Martienssen R."/>
            <person name="McCombie W.R."/>
            <person name="Wilson R.K."/>
            <person name="Murphy G."/>
            <person name="Bancroft I."/>
            <person name="Volckaert G."/>
            <person name="Wambutt R."/>
            <person name="Duesterhoeft A."/>
            <person name="Stiekema W."/>
            <person name="Pohl T."/>
            <person name="Entian K.-D."/>
            <person name="Terryn N."/>
            <person name="Hartley N."/>
            <person name="Bent E."/>
            <person name="Johnson S."/>
            <person name="Langham S.-A."/>
            <person name="McCullagh B."/>
            <person name="Robben J."/>
            <person name="Grymonprez B."/>
            <person name="Zimmermann W."/>
            <person name="Ramsperger U."/>
            <person name="Wedler H."/>
            <person name="Balke K."/>
            <person name="Wedler E."/>
            <person name="Peters S."/>
            <person name="van Staveren M."/>
            <person name="Dirkse W."/>
            <person name="Mooijman P."/>
            <person name="Klein Lankhorst R."/>
            <person name="Weitzenegger T."/>
            <person name="Bothe G."/>
            <person name="Rose M."/>
            <person name="Hauf J."/>
            <person name="Berneiser S."/>
            <person name="Hempel S."/>
            <person name="Feldpausch M."/>
            <person name="Lamberth S."/>
            <person name="Villarroel R."/>
            <person name="Gielen J."/>
            <person name="Ardiles W."/>
            <person name="Bents O."/>
            <person name="Lemcke K."/>
            <person name="Kolesov G."/>
            <person name="Mayer K.F.X."/>
            <person name="Rudd S."/>
            <person name="Schoof H."/>
            <person name="Schueller C."/>
            <person name="Zaccaria P."/>
            <person name="Mewes H.-W."/>
            <person name="Bevan M."/>
            <person name="Fransz P.F."/>
        </authorList>
    </citation>
    <scope>NUCLEOTIDE SEQUENCE [LARGE SCALE GENOMIC DNA]</scope>
    <source>
        <strain>cv. Columbia</strain>
    </source>
</reference>
<reference key="2">
    <citation type="journal article" date="2017" name="Plant J.">
        <title>Araport11: a complete reannotation of the Arabidopsis thaliana reference genome.</title>
        <authorList>
            <person name="Cheng C.Y."/>
            <person name="Krishnakumar V."/>
            <person name="Chan A.P."/>
            <person name="Thibaud-Nissen F."/>
            <person name="Schobel S."/>
            <person name="Town C.D."/>
        </authorList>
    </citation>
    <scope>GENOME REANNOTATION</scope>
    <source>
        <strain>cv. Columbia</strain>
    </source>
</reference>
<reference key="3">
    <citation type="journal article" date="2004" name="Plant Cell">
        <title>Genome-wide analysis of Arabidopsis pentatricopeptide repeat proteins reveals their essential role in organelle biogenesis.</title>
        <authorList>
            <person name="Lurin C."/>
            <person name="Andres C."/>
            <person name="Aubourg S."/>
            <person name="Bellaoui M."/>
            <person name="Bitton F."/>
            <person name="Bruyere C."/>
            <person name="Caboche M."/>
            <person name="Debast C."/>
            <person name="Gualberto J."/>
            <person name="Hoffmann B."/>
            <person name="Lecharny A."/>
            <person name="Le Ret M."/>
            <person name="Martin-Magniette M.-L."/>
            <person name="Mireau H."/>
            <person name="Peeters N."/>
            <person name="Renou J.-P."/>
            <person name="Szurek B."/>
            <person name="Taconnat L."/>
            <person name="Small I."/>
        </authorList>
    </citation>
    <scope>GENE FAMILY</scope>
</reference>
<evidence type="ECO:0000255" key="1"/>
<evidence type="ECO:0000305" key="2"/>